<organism>
    <name type="scientific">Saccharomyces cerevisiae (strain AWRI1631)</name>
    <name type="common">Baker's yeast</name>
    <dbReference type="NCBI Taxonomy" id="545124"/>
    <lineage>
        <taxon>Eukaryota</taxon>
        <taxon>Fungi</taxon>
        <taxon>Dikarya</taxon>
        <taxon>Ascomycota</taxon>
        <taxon>Saccharomycotina</taxon>
        <taxon>Saccharomycetes</taxon>
        <taxon>Saccharomycetales</taxon>
        <taxon>Saccharomycetaceae</taxon>
        <taxon>Saccharomyces</taxon>
    </lineage>
</organism>
<gene>
    <name type="primary">AIM18</name>
    <name type="synonym">FMP22</name>
    <name type="ORF">AWRI1631_82500</name>
</gene>
<comment type="subcellular location">
    <subcellularLocation>
        <location evidence="1">Mitochondrion</location>
    </subcellularLocation>
</comment>
<comment type="similarity">
    <text evidence="3">Belongs to the AIM18/AIM46 family.</text>
</comment>
<proteinExistence type="inferred from homology"/>
<protein>
    <recommendedName>
        <fullName>Altered inheritance of mitochondria protein 18, mitochondrial</fullName>
    </recommendedName>
</protein>
<accession>B5VKC6</accession>
<name>AIM18_YEAS6</name>
<keyword id="KW-0496">Mitochondrion</keyword>
<keyword id="KW-0809">Transit peptide</keyword>
<reference key="1">
    <citation type="journal article" date="2008" name="FEMS Yeast Res.">
        <title>Comparative genome analysis of a Saccharomyces cerevisiae wine strain.</title>
        <authorList>
            <person name="Borneman A.R."/>
            <person name="Forgan A.H."/>
            <person name="Pretorius I.S."/>
            <person name="Chambers P.J."/>
        </authorList>
    </citation>
    <scope>NUCLEOTIDE SEQUENCE [LARGE SCALE GENOMIC DNA]</scope>
    <source>
        <strain>AWRI1631</strain>
    </source>
</reference>
<sequence length="321" mass="36532">MDRGRCANMLKSLQRTLAKCQKSPSTNHWQCFKRNFTSIRATKYPGRSNSTFHYWPWFAASTLLATSLYYRDRPVQNDDKTDAFPSHTESIQVDSSVSDFPLTITALNFPVSTTFKLLGYGQRHVTFLRFKVYALGLYLAENDENLVSDTLNETYLHKYFLDVDDSKTPKENLARLLKRDDSKSVMMIDDLLDSGMRMLAKITPVRNTDFKHLKEGLVKTISKHPDVANNKDTLAKGLSELNDAFSRKGSVRKNDDLIIELLANGALQFSYHDSKNNEFEVMGVVNNQLVGKFLFSQYLCGEKSPSPQAKKTTIDKLITLL</sequence>
<dbReference type="EMBL" id="ABSV01001153">
    <property type="protein sequence ID" value="EDZ71624.1"/>
    <property type="molecule type" value="Genomic_DNA"/>
</dbReference>
<dbReference type="SMR" id="B5VKC6"/>
<dbReference type="OrthoDB" id="11535at4893"/>
<dbReference type="Proteomes" id="UP000008988">
    <property type="component" value="Unassembled WGS sequence"/>
</dbReference>
<dbReference type="GO" id="GO:0005739">
    <property type="term" value="C:mitochondrion"/>
    <property type="evidence" value="ECO:0007669"/>
    <property type="project" value="UniProtKB-SubCell"/>
</dbReference>
<dbReference type="GO" id="GO:0016872">
    <property type="term" value="F:intramolecular lyase activity"/>
    <property type="evidence" value="ECO:0007669"/>
    <property type="project" value="InterPro"/>
</dbReference>
<dbReference type="Gene3D" id="3.50.70.10">
    <property type="match status" value="1"/>
</dbReference>
<dbReference type="InterPro" id="IPR016087">
    <property type="entry name" value="Chalcone_isomerase"/>
</dbReference>
<dbReference type="InterPro" id="IPR016088">
    <property type="entry name" value="Chalcone_isomerase_3-sand"/>
</dbReference>
<dbReference type="InterPro" id="IPR036298">
    <property type="entry name" value="Chalcone_isomerase_sf"/>
</dbReference>
<dbReference type="PANTHER" id="PTHR47284">
    <property type="entry name" value="FATTY-ACID-BINDING PROTEIN 2"/>
    <property type="match status" value="1"/>
</dbReference>
<dbReference type="PANTHER" id="PTHR47284:SF3">
    <property type="entry name" value="FATTY-ACID-BINDING PROTEIN 2"/>
    <property type="match status" value="1"/>
</dbReference>
<dbReference type="Pfam" id="PF16035">
    <property type="entry name" value="Chalcone_2"/>
    <property type="match status" value="1"/>
</dbReference>
<dbReference type="SUPFAM" id="SSF54626">
    <property type="entry name" value="Chalcone isomerase"/>
    <property type="match status" value="1"/>
</dbReference>
<evidence type="ECO:0000250" key="1"/>
<evidence type="ECO:0000255" key="2"/>
<evidence type="ECO:0000305" key="3"/>
<feature type="transit peptide" description="Mitochondrion" evidence="2">
    <location>
        <begin position="1"/>
        <end position="72"/>
    </location>
</feature>
<feature type="chain" id="PRO_0000399557" description="Altered inheritance of mitochondria protein 18, mitochondrial">
    <location>
        <begin position="73"/>
        <end position="321"/>
    </location>
</feature>